<name>FES_OCIBA</name>
<gene>
    <name type="primary">FES</name>
</gene>
<sequence>MWSTISISMNVAILKKPLNFLHNSNNKASNPRCVSSTRRRPSCPLQLDVEPRRSGNYQPSAWDFNYIQSLNNNHSKEERHLQGKAKLIEEVKMLLEQEMAAVQQLEFIEDLKNLGLSYLFQDEIKIILNSIYNHHKCFHNNHQQRTDENADLYFVALGFRLFRQHGFKVSQEVFDCFKNEEGSDFIPNLAEDTKGLLQLYEASYLVRQDEDTLEMARQFSTKILQKKVEEKMIEENLLSWTCHSLELPLHWRVQRIEAKWFLDAYASKPDMNPIIFELAKLEFNIAQALQQGELKDLSRWWNDTGIAEKLPFARDRIVEAHYWAIGTLEPYQYRYQRSLIAKIIALTTVVDDVYDVYGTLDEPQLFTDAIRRWDIESINQLPHYLQLCYLAIYNFVSELAYDIFRDKGFNSLPYLHKSWLDLVEAYFLEAKWFHSGYTPTLEEYLNNSKMTITCPAIVSEIYFAFANSIDKTEVESVYKYHDILYLSGMLLRLPDDLGTTTFEMKRGDVAKAIQCYMKEHNASEEEAREHIRFLMREAWKQMNTAAAANNCPFVNDFVVGAASLGRVANFVYVEGDGFGVQHSKIHQQMAELLFYPYQ</sequence>
<proteinExistence type="evidence at protein level"/>
<dbReference type="EC" id="4.2.3.10"/>
<dbReference type="EMBL" id="AY693648">
    <property type="protein sequence ID" value="AAV63790.1"/>
    <property type="molecule type" value="mRNA"/>
</dbReference>
<dbReference type="SMR" id="Q5SBP2"/>
<dbReference type="KEGG" id="ag:AAV63790"/>
<dbReference type="BioCyc" id="MetaCyc:MONOMER-15443"/>
<dbReference type="UniPathway" id="UPA00213"/>
<dbReference type="GO" id="GO:0009507">
    <property type="term" value="C:chloroplast"/>
    <property type="evidence" value="ECO:0007669"/>
    <property type="project" value="UniProtKB-SubCell"/>
</dbReference>
<dbReference type="GO" id="GO:0050437">
    <property type="term" value="F:(-)-endo-fenchol synthase activity"/>
    <property type="evidence" value="ECO:0007669"/>
    <property type="project" value="UniProtKB-EC"/>
</dbReference>
<dbReference type="GO" id="GO:0000287">
    <property type="term" value="F:magnesium ion binding"/>
    <property type="evidence" value="ECO:0007669"/>
    <property type="project" value="InterPro"/>
</dbReference>
<dbReference type="GO" id="GO:0050550">
    <property type="term" value="F:pinene synthase activity"/>
    <property type="evidence" value="ECO:0007669"/>
    <property type="project" value="UniProtKB-ARBA"/>
</dbReference>
<dbReference type="GO" id="GO:0046248">
    <property type="term" value="P:alpha-pinene biosynthetic process"/>
    <property type="evidence" value="ECO:0007669"/>
    <property type="project" value="UniProtKB-ARBA"/>
</dbReference>
<dbReference type="GO" id="GO:0016102">
    <property type="term" value="P:diterpenoid biosynthetic process"/>
    <property type="evidence" value="ECO:0007669"/>
    <property type="project" value="InterPro"/>
</dbReference>
<dbReference type="GO" id="GO:0010597">
    <property type="term" value="P:green leaf volatile biosynthetic process"/>
    <property type="evidence" value="ECO:0007669"/>
    <property type="project" value="UniProtKB-ARBA"/>
</dbReference>
<dbReference type="GO" id="GO:0016099">
    <property type="term" value="P:monoterpenoid biosynthetic process"/>
    <property type="evidence" value="ECO:0007669"/>
    <property type="project" value="UniProtKB-ARBA"/>
</dbReference>
<dbReference type="CDD" id="cd00684">
    <property type="entry name" value="Terpene_cyclase_plant_C1"/>
    <property type="match status" value="1"/>
</dbReference>
<dbReference type="FunFam" id="1.10.600.10:FF:000007">
    <property type="entry name" value="Isoprene synthase, chloroplastic"/>
    <property type="match status" value="1"/>
</dbReference>
<dbReference type="FunFam" id="1.50.10.130:FF:000001">
    <property type="entry name" value="Isoprene synthase, chloroplastic"/>
    <property type="match status" value="1"/>
</dbReference>
<dbReference type="Gene3D" id="1.10.600.10">
    <property type="entry name" value="Farnesyl Diphosphate Synthase"/>
    <property type="match status" value="1"/>
</dbReference>
<dbReference type="Gene3D" id="1.50.10.130">
    <property type="entry name" value="Terpene synthase, N-terminal domain"/>
    <property type="match status" value="1"/>
</dbReference>
<dbReference type="InterPro" id="IPR008949">
    <property type="entry name" value="Isoprenoid_synthase_dom_sf"/>
</dbReference>
<dbReference type="InterPro" id="IPR034741">
    <property type="entry name" value="Terpene_cyclase-like_1_C"/>
</dbReference>
<dbReference type="InterPro" id="IPR044814">
    <property type="entry name" value="Terpene_cyclase_plant_C1"/>
</dbReference>
<dbReference type="InterPro" id="IPR001906">
    <property type="entry name" value="Terpene_synth_N"/>
</dbReference>
<dbReference type="InterPro" id="IPR036965">
    <property type="entry name" value="Terpene_synth_N_sf"/>
</dbReference>
<dbReference type="InterPro" id="IPR050148">
    <property type="entry name" value="Terpene_synthase-like"/>
</dbReference>
<dbReference type="InterPro" id="IPR005630">
    <property type="entry name" value="Terpene_synthase_metal-bd"/>
</dbReference>
<dbReference type="InterPro" id="IPR008930">
    <property type="entry name" value="Terpenoid_cyclase/PrenylTrfase"/>
</dbReference>
<dbReference type="PANTHER" id="PTHR31225">
    <property type="entry name" value="OS04G0344100 PROTEIN-RELATED"/>
    <property type="match status" value="1"/>
</dbReference>
<dbReference type="PANTHER" id="PTHR31225:SF9">
    <property type="entry name" value="TERPENE SYNTHASE 10"/>
    <property type="match status" value="1"/>
</dbReference>
<dbReference type="Pfam" id="PF01397">
    <property type="entry name" value="Terpene_synth"/>
    <property type="match status" value="1"/>
</dbReference>
<dbReference type="Pfam" id="PF03936">
    <property type="entry name" value="Terpene_synth_C"/>
    <property type="match status" value="1"/>
</dbReference>
<dbReference type="SFLD" id="SFLDG01019">
    <property type="entry name" value="Terpene_Cyclase_Like_1_C_Termi"/>
    <property type="match status" value="1"/>
</dbReference>
<dbReference type="SFLD" id="SFLDG01604">
    <property type="entry name" value="Terpene_Cyclase_Like_1_C_Termi"/>
    <property type="match status" value="1"/>
</dbReference>
<dbReference type="SUPFAM" id="SSF48239">
    <property type="entry name" value="Terpenoid cyclases/Protein prenyltransferases"/>
    <property type="match status" value="1"/>
</dbReference>
<dbReference type="SUPFAM" id="SSF48576">
    <property type="entry name" value="Terpenoid synthases"/>
    <property type="match status" value="1"/>
</dbReference>
<keyword id="KW-0150">Chloroplast</keyword>
<keyword id="KW-0456">Lyase</keyword>
<keyword id="KW-0460">Magnesium</keyword>
<keyword id="KW-0479">Metal-binding</keyword>
<keyword id="KW-0934">Plastid</keyword>
<keyword id="KW-0809">Transit peptide</keyword>
<protein>
    <recommendedName>
        <fullName>(-)-endo-fenchol synthase, chloroplastic</fullName>
        <ecNumber>4.2.3.10</ecNumber>
    </recommendedName>
</protein>
<comment type="function">
    <text evidence="3">Monoterpene synthase that catalyzes the formation of fenchol from geranyl diphosphate.</text>
</comment>
<comment type="catalytic activity">
    <reaction evidence="3">
        <text>(2E)-geranyl diphosphate + H2O = (1S,2S,4R)-endo-fenchol + diphosphate</text>
        <dbReference type="Rhea" id="RHEA:20565"/>
        <dbReference type="ChEBI" id="CHEBI:15377"/>
        <dbReference type="ChEBI" id="CHEBI:15405"/>
        <dbReference type="ChEBI" id="CHEBI:33019"/>
        <dbReference type="ChEBI" id="CHEBI:58057"/>
        <dbReference type="EC" id="4.2.3.10"/>
    </reaction>
</comment>
<comment type="cofactor">
    <cofactor evidence="1">
        <name>Mg(2+)</name>
        <dbReference type="ChEBI" id="CHEBI:18420"/>
    </cofactor>
    <cofactor evidence="1">
        <name>Mn(2+)</name>
        <dbReference type="ChEBI" id="CHEBI:29035"/>
    </cofactor>
    <text evidence="1">Binds 3 Mg(2+) or Mn(2+) ions per subunit.</text>
</comment>
<comment type="pathway">
    <text>Secondary metabolite biosynthesis; terpenoid biosynthesis.</text>
</comment>
<comment type="subcellular location">
    <subcellularLocation>
        <location evidence="4">Plastid</location>
        <location evidence="4">Chloroplast</location>
    </subcellularLocation>
</comment>
<comment type="domain">
    <text>The Asp-Asp-Xaa-Xaa-Asp/Glu (DDXXD/E) motif is important for the catalytic activity, presumably through binding to Mg(2+).</text>
</comment>
<comment type="similarity">
    <text evidence="4">Belongs to the terpene synthase family.</text>
</comment>
<evidence type="ECO:0000250" key="1"/>
<evidence type="ECO:0000255" key="2"/>
<evidence type="ECO:0000269" key="3">
    <source>
    </source>
</evidence>
<evidence type="ECO:0000305" key="4"/>
<organism>
    <name type="scientific">Ocimum basilicum</name>
    <name type="common">Sweet basil</name>
    <dbReference type="NCBI Taxonomy" id="39350"/>
    <lineage>
        <taxon>Eukaryota</taxon>
        <taxon>Viridiplantae</taxon>
        <taxon>Streptophyta</taxon>
        <taxon>Embryophyta</taxon>
        <taxon>Tracheophyta</taxon>
        <taxon>Spermatophyta</taxon>
        <taxon>Magnoliopsida</taxon>
        <taxon>eudicotyledons</taxon>
        <taxon>Gunneridae</taxon>
        <taxon>Pentapetalae</taxon>
        <taxon>asterids</taxon>
        <taxon>lamiids</taxon>
        <taxon>Lamiales</taxon>
        <taxon>Lamiaceae</taxon>
        <taxon>Nepetoideae</taxon>
        <taxon>Ocimeae</taxon>
        <taxon>Ociminae</taxon>
        <taxon>Ocimum</taxon>
    </lineage>
</organism>
<accession>Q5SBP2</accession>
<reference key="1">
    <citation type="journal article" date="2004" name="Plant Physiol.">
        <title>The biochemical and molecular basis for the divergent patterns in the biosynthesis of terpenes and phenylpropenes in the peltate glands of three cultivars of basil.</title>
        <authorList>
            <person name="Iijima Y."/>
            <person name="Davidovich-Rikanati R."/>
            <person name="Fridman E."/>
            <person name="Gang D.R."/>
            <person name="Bar E."/>
            <person name="Lewinsohn E."/>
            <person name="Pichersky E."/>
        </authorList>
    </citation>
    <scope>NUCLEOTIDE SEQUENCE [MRNA]</scope>
    <scope>FUNCTION</scope>
    <scope>CATALYTIC ACTIVITY</scope>
</reference>
<feature type="transit peptide" description="Chloroplast" evidence="2">
    <location>
        <begin position="1"/>
        <end position="34"/>
    </location>
</feature>
<feature type="chain" id="PRO_0000399249" description="(-)-endo-fenchol synthase, chloroplastic">
    <location>
        <begin position="35"/>
        <end position="598"/>
    </location>
</feature>
<feature type="short sequence motif" description="DDXXD motif">
    <location>
        <begin position="351"/>
        <end position="355"/>
    </location>
</feature>
<feature type="binding site" evidence="1">
    <location>
        <position position="351"/>
    </location>
    <ligand>
        <name>Mg(2+)</name>
        <dbReference type="ChEBI" id="CHEBI:18420"/>
        <label>1</label>
    </ligand>
</feature>
<feature type="binding site" evidence="1">
    <location>
        <position position="351"/>
    </location>
    <ligand>
        <name>Mg(2+)</name>
        <dbReference type="ChEBI" id="CHEBI:18420"/>
        <label>2</label>
    </ligand>
</feature>
<feature type="binding site" evidence="1">
    <location>
        <position position="355"/>
    </location>
    <ligand>
        <name>Mg(2+)</name>
        <dbReference type="ChEBI" id="CHEBI:18420"/>
        <label>1</label>
    </ligand>
</feature>
<feature type="binding site" evidence="1">
    <location>
        <position position="355"/>
    </location>
    <ligand>
        <name>Mg(2+)</name>
        <dbReference type="ChEBI" id="CHEBI:18420"/>
        <label>2</label>
    </ligand>
</feature>
<feature type="binding site" evidence="1">
    <location>
        <position position="495"/>
    </location>
    <ligand>
        <name>Mg(2+)</name>
        <dbReference type="ChEBI" id="CHEBI:18420"/>
        <label>3</label>
    </ligand>
</feature>
<feature type="binding site" evidence="1">
    <location>
        <position position="499"/>
    </location>
    <ligand>
        <name>Mg(2+)</name>
        <dbReference type="ChEBI" id="CHEBI:18420"/>
        <label>3</label>
    </ligand>
</feature>
<feature type="binding site" evidence="1">
    <location>
        <position position="503"/>
    </location>
    <ligand>
        <name>Mg(2+)</name>
        <dbReference type="ChEBI" id="CHEBI:18420"/>
        <label>3</label>
    </ligand>
</feature>